<organism>
    <name type="scientific">Salmonella newport (strain SL254)</name>
    <dbReference type="NCBI Taxonomy" id="423368"/>
    <lineage>
        <taxon>Bacteria</taxon>
        <taxon>Pseudomonadati</taxon>
        <taxon>Pseudomonadota</taxon>
        <taxon>Gammaproteobacteria</taxon>
        <taxon>Enterobacterales</taxon>
        <taxon>Enterobacteriaceae</taxon>
        <taxon>Salmonella</taxon>
    </lineage>
</organism>
<gene>
    <name evidence="1" type="primary">rpmI</name>
    <name type="ordered locus">SNSL254_A1446</name>
</gene>
<dbReference type="EMBL" id="CP001113">
    <property type="protein sequence ID" value="ACF61343.1"/>
    <property type="molecule type" value="Genomic_DNA"/>
</dbReference>
<dbReference type="RefSeq" id="WP_001124225.1">
    <property type="nucleotide sequence ID" value="NZ_CCMR01000003.1"/>
</dbReference>
<dbReference type="SMR" id="B4T4N0"/>
<dbReference type="GeneID" id="97601348"/>
<dbReference type="KEGG" id="see:SNSL254_A1446"/>
<dbReference type="HOGENOM" id="CLU_169643_1_1_6"/>
<dbReference type="Proteomes" id="UP000008824">
    <property type="component" value="Chromosome"/>
</dbReference>
<dbReference type="GO" id="GO:0022625">
    <property type="term" value="C:cytosolic large ribosomal subunit"/>
    <property type="evidence" value="ECO:0007669"/>
    <property type="project" value="TreeGrafter"/>
</dbReference>
<dbReference type="GO" id="GO:0003735">
    <property type="term" value="F:structural constituent of ribosome"/>
    <property type="evidence" value="ECO:0007669"/>
    <property type="project" value="InterPro"/>
</dbReference>
<dbReference type="GO" id="GO:0006412">
    <property type="term" value="P:translation"/>
    <property type="evidence" value="ECO:0007669"/>
    <property type="project" value="UniProtKB-UniRule"/>
</dbReference>
<dbReference type="FunFam" id="4.10.410.60:FF:000001">
    <property type="entry name" value="50S ribosomal protein L35"/>
    <property type="match status" value="1"/>
</dbReference>
<dbReference type="Gene3D" id="4.10.410.60">
    <property type="match status" value="1"/>
</dbReference>
<dbReference type="HAMAP" id="MF_00514">
    <property type="entry name" value="Ribosomal_bL35"/>
    <property type="match status" value="1"/>
</dbReference>
<dbReference type="InterPro" id="IPR001706">
    <property type="entry name" value="Ribosomal_bL35"/>
</dbReference>
<dbReference type="InterPro" id="IPR021137">
    <property type="entry name" value="Ribosomal_bL35-like"/>
</dbReference>
<dbReference type="InterPro" id="IPR018265">
    <property type="entry name" value="Ribosomal_bL35_CS"/>
</dbReference>
<dbReference type="InterPro" id="IPR037229">
    <property type="entry name" value="Ribosomal_bL35_sf"/>
</dbReference>
<dbReference type="NCBIfam" id="TIGR00001">
    <property type="entry name" value="rpmI_bact"/>
    <property type="match status" value="1"/>
</dbReference>
<dbReference type="PANTHER" id="PTHR33343">
    <property type="entry name" value="54S RIBOSOMAL PROTEIN BL35M"/>
    <property type="match status" value="1"/>
</dbReference>
<dbReference type="PANTHER" id="PTHR33343:SF1">
    <property type="entry name" value="LARGE RIBOSOMAL SUBUNIT PROTEIN BL35M"/>
    <property type="match status" value="1"/>
</dbReference>
<dbReference type="Pfam" id="PF01632">
    <property type="entry name" value="Ribosomal_L35p"/>
    <property type="match status" value="1"/>
</dbReference>
<dbReference type="PRINTS" id="PR00064">
    <property type="entry name" value="RIBOSOMALL35"/>
</dbReference>
<dbReference type="SUPFAM" id="SSF143034">
    <property type="entry name" value="L35p-like"/>
    <property type="match status" value="1"/>
</dbReference>
<dbReference type="PROSITE" id="PS00936">
    <property type="entry name" value="RIBOSOMAL_L35"/>
    <property type="match status" value="1"/>
</dbReference>
<keyword id="KW-0687">Ribonucleoprotein</keyword>
<keyword id="KW-0689">Ribosomal protein</keyword>
<reference key="1">
    <citation type="journal article" date="2011" name="J. Bacteriol.">
        <title>Comparative genomics of 28 Salmonella enterica isolates: evidence for CRISPR-mediated adaptive sublineage evolution.</title>
        <authorList>
            <person name="Fricke W.F."/>
            <person name="Mammel M.K."/>
            <person name="McDermott P.F."/>
            <person name="Tartera C."/>
            <person name="White D.G."/>
            <person name="Leclerc J.E."/>
            <person name="Ravel J."/>
            <person name="Cebula T.A."/>
        </authorList>
    </citation>
    <scope>NUCLEOTIDE SEQUENCE [LARGE SCALE GENOMIC DNA]</scope>
    <source>
        <strain>SL254</strain>
    </source>
</reference>
<evidence type="ECO:0000255" key="1">
    <source>
        <dbReference type="HAMAP-Rule" id="MF_00514"/>
    </source>
</evidence>
<evidence type="ECO:0000256" key="2">
    <source>
        <dbReference type="SAM" id="MobiDB-lite"/>
    </source>
</evidence>
<evidence type="ECO:0000305" key="3"/>
<accession>B4T4N0</accession>
<proteinExistence type="inferred from homology"/>
<name>RL35_SALNS</name>
<protein>
    <recommendedName>
        <fullName evidence="1">Large ribosomal subunit protein bL35</fullName>
    </recommendedName>
    <alternativeName>
        <fullName evidence="3">50S ribosomal protein L35</fullName>
    </alternativeName>
</protein>
<sequence length="65" mass="7289">MPKIKTVRGAAKRFKKTGKGGFKHKHANLRHILTKKATKRKRHLRPKAMVSKGDLGLVIACLPYA</sequence>
<comment type="similarity">
    <text evidence="1">Belongs to the bacterial ribosomal protein bL35 family.</text>
</comment>
<feature type="chain" id="PRO_1000127406" description="Large ribosomal subunit protein bL35">
    <location>
        <begin position="1"/>
        <end position="65"/>
    </location>
</feature>
<feature type="region of interest" description="Disordered" evidence="2">
    <location>
        <begin position="1"/>
        <end position="22"/>
    </location>
</feature>
<feature type="compositionally biased region" description="Basic residues" evidence="2">
    <location>
        <begin position="10"/>
        <end position="22"/>
    </location>
</feature>